<organism>
    <name type="scientific">Lactococcus lactis subsp. lactis (strain IL1403)</name>
    <name type="common">Streptococcus lactis</name>
    <dbReference type="NCBI Taxonomy" id="272623"/>
    <lineage>
        <taxon>Bacteria</taxon>
        <taxon>Bacillati</taxon>
        <taxon>Bacillota</taxon>
        <taxon>Bacilli</taxon>
        <taxon>Lactobacillales</taxon>
        <taxon>Streptococcaceae</taxon>
        <taxon>Lactococcus</taxon>
    </lineage>
</organism>
<comment type="function">
    <text evidence="1">Located on the platform of the 30S subunit, it bridges several disparate RNA helices of the 16S rRNA. Forms part of the Shine-Dalgarno cleft in the 70S ribosome.</text>
</comment>
<comment type="subunit">
    <text evidence="1">Part of the 30S ribosomal subunit. Interacts with proteins S7 and S18. Binds to IF-3.</text>
</comment>
<comment type="similarity">
    <text evidence="1">Belongs to the universal ribosomal protein uS11 family.</text>
</comment>
<accession>Q9CDY2</accession>
<sequence>MAKITRKRRVKKNIESGIVHIQSTFNNTIVMITDVHGNALAWSSAGALGFKGSKKSTPFAAQMASEAAAKAAQEQGLKTVSVTVKGPGSGRESAIRALAAAGLNVTSISDVTPVPHNGARPPKRRRV</sequence>
<proteinExistence type="inferred from homology"/>
<gene>
    <name evidence="1" type="primary">rpsK</name>
    <name type="ordered locus">LL2069</name>
    <name type="ORF">L0388</name>
</gene>
<dbReference type="EMBL" id="AE005176">
    <property type="protein sequence ID" value="AAK06167.1"/>
    <property type="molecule type" value="Genomic_DNA"/>
</dbReference>
<dbReference type="PIR" id="E86883">
    <property type="entry name" value="E86883"/>
</dbReference>
<dbReference type="RefSeq" id="NP_268226.1">
    <property type="nucleotide sequence ID" value="NC_002662.1"/>
</dbReference>
<dbReference type="RefSeq" id="WP_010906297.1">
    <property type="nucleotide sequence ID" value="NC_002662.1"/>
</dbReference>
<dbReference type="SMR" id="Q9CDY2"/>
<dbReference type="PaxDb" id="272623-L0388"/>
<dbReference type="EnsemblBacteria" id="AAK06167">
    <property type="protein sequence ID" value="AAK06167"/>
    <property type="gene ID" value="L0388"/>
</dbReference>
<dbReference type="GeneID" id="89634421"/>
<dbReference type="KEGG" id="lla:L0388"/>
<dbReference type="PATRIC" id="fig|272623.7.peg.2228"/>
<dbReference type="eggNOG" id="COG0100">
    <property type="taxonomic scope" value="Bacteria"/>
</dbReference>
<dbReference type="HOGENOM" id="CLU_072439_5_0_9"/>
<dbReference type="OrthoDB" id="9806415at2"/>
<dbReference type="Proteomes" id="UP000002196">
    <property type="component" value="Chromosome"/>
</dbReference>
<dbReference type="GO" id="GO:1990904">
    <property type="term" value="C:ribonucleoprotein complex"/>
    <property type="evidence" value="ECO:0007669"/>
    <property type="project" value="UniProtKB-KW"/>
</dbReference>
<dbReference type="GO" id="GO:0005840">
    <property type="term" value="C:ribosome"/>
    <property type="evidence" value="ECO:0007669"/>
    <property type="project" value="UniProtKB-KW"/>
</dbReference>
<dbReference type="GO" id="GO:0019843">
    <property type="term" value="F:rRNA binding"/>
    <property type="evidence" value="ECO:0007669"/>
    <property type="project" value="UniProtKB-UniRule"/>
</dbReference>
<dbReference type="GO" id="GO:0003735">
    <property type="term" value="F:structural constituent of ribosome"/>
    <property type="evidence" value="ECO:0007669"/>
    <property type="project" value="InterPro"/>
</dbReference>
<dbReference type="GO" id="GO:0006412">
    <property type="term" value="P:translation"/>
    <property type="evidence" value="ECO:0007669"/>
    <property type="project" value="UniProtKB-UniRule"/>
</dbReference>
<dbReference type="FunFam" id="3.30.420.80:FF:000001">
    <property type="entry name" value="30S ribosomal protein S11"/>
    <property type="match status" value="1"/>
</dbReference>
<dbReference type="Gene3D" id="3.30.420.80">
    <property type="entry name" value="Ribosomal protein S11"/>
    <property type="match status" value="1"/>
</dbReference>
<dbReference type="HAMAP" id="MF_01310">
    <property type="entry name" value="Ribosomal_uS11"/>
    <property type="match status" value="1"/>
</dbReference>
<dbReference type="InterPro" id="IPR001971">
    <property type="entry name" value="Ribosomal_uS11"/>
</dbReference>
<dbReference type="InterPro" id="IPR019981">
    <property type="entry name" value="Ribosomal_uS11_bac-type"/>
</dbReference>
<dbReference type="InterPro" id="IPR018102">
    <property type="entry name" value="Ribosomal_uS11_CS"/>
</dbReference>
<dbReference type="InterPro" id="IPR036967">
    <property type="entry name" value="Ribosomal_uS11_sf"/>
</dbReference>
<dbReference type="NCBIfam" id="NF003698">
    <property type="entry name" value="PRK05309.1"/>
    <property type="match status" value="1"/>
</dbReference>
<dbReference type="NCBIfam" id="TIGR03632">
    <property type="entry name" value="uS11_bact"/>
    <property type="match status" value="1"/>
</dbReference>
<dbReference type="PANTHER" id="PTHR11759">
    <property type="entry name" value="40S RIBOSOMAL PROTEIN S14/30S RIBOSOMAL PROTEIN S11"/>
    <property type="match status" value="1"/>
</dbReference>
<dbReference type="Pfam" id="PF00411">
    <property type="entry name" value="Ribosomal_S11"/>
    <property type="match status" value="1"/>
</dbReference>
<dbReference type="PIRSF" id="PIRSF002131">
    <property type="entry name" value="Ribosomal_S11"/>
    <property type="match status" value="1"/>
</dbReference>
<dbReference type="SUPFAM" id="SSF53137">
    <property type="entry name" value="Translational machinery components"/>
    <property type="match status" value="1"/>
</dbReference>
<dbReference type="PROSITE" id="PS00054">
    <property type="entry name" value="RIBOSOMAL_S11"/>
    <property type="match status" value="1"/>
</dbReference>
<feature type="chain" id="PRO_0000123161" description="Small ribosomal subunit protein uS11">
    <location>
        <begin position="1"/>
        <end position="127"/>
    </location>
</feature>
<keyword id="KW-1185">Reference proteome</keyword>
<keyword id="KW-0687">Ribonucleoprotein</keyword>
<keyword id="KW-0689">Ribosomal protein</keyword>
<keyword id="KW-0694">RNA-binding</keyword>
<keyword id="KW-0699">rRNA-binding</keyword>
<evidence type="ECO:0000255" key="1">
    <source>
        <dbReference type="HAMAP-Rule" id="MF_01310"/>
    </source>
</evidence>
<evidence type="ECO:0000305" key="2"/>
<protein>
    <recommendedName>
        <fullName evidence="1">Small ribosomal subunit protein uS11</fullName>
    </recommendedName>
    <alternativeName>
        <fullName evidence="2">30S ribosomal protein S11</fullName>
    </alternativeName>
</protein>
<name>RS11_LACLA</name>
<reference key="1">
    <citation type="journal article" date="2001" name="Genome Res.">
        <title>The complete genome sequence of the lactic acid bacterium Lactococcus lactis ssp. lactis IL1403.</title>
        <authorList>
            <person name="Bolotin A."/>
            <person name="Wincker P."/>
            <person name="Mauger S."/>
            <person name="Jaillon O."/>
            <person name="Malarme K."/>
            <person name="Weissenbach J."/>
            <person name="Ehrlich S.D."/>
            <person name="Sorokin A."/>
        </authorList>
    </citation>
    <scope>NUCLEOTIDE SEQUENCE [LARGE SCALE GENOMIC DNA]</scope>
    <source>
        <strain>IL1403</strain>
    </source>
</reference>